<organism>
    <name type="scientific">Escherichia coli O157:H7 (strain EC4115 / EHEC)</name>
    <dbReference type="NCBI Taxonomy" id="444450"/>
    <lineage>
        <taxon>Bacteria</taxon>
        <taxon>Pseudomonadati</taxon>
        <taxon>Pseudomonadota</taxon>
        <taxon>Gammaproteobacteria</taxon>
        <taxon>Enterobacterales</taxon>
        <taxon>Enterobacteriaceae</taxon>
        <taxon>Escherichia</taxon>
    </lineage>
</organism>
<proteinExistence type="inferred from homology"/>
<keyword id="KW-1283">Bacterial microcompartment</keyword>
<keyword id="KW-0846">Cobalamin</keyword>
<keyword id="KW-0170">Cobalt</keyword>
<keyword id="KW-0456">Lyase</keyword>
<gene>
    <name evidence="1" type="primary">eutC</name>
    <name type="ordered locus">ECH74115_3670</name>
</gene>
<feature type="chain" id="PRO_1000130086" description="Ethanolamine ammonia-lyase small subunit">
    <location>
        <begin position="1"/>
        <end position="295"/>
    </location>
</feature>
<feature type="binding site" evidence="1">
    <location>
        <position position="207"/>
    </location>
    <ligand>
        <name>adenosylcob(III)alamin</name>
        <dbReference type="ChEBI" id="CHEBI:18408"/>
    </ligand>
</feature>
<feature type="binding site" evidence="1">
    <location>
        <position position="228"/>
    </location>
    <ligand>
        <name>adenosylcob(III)alamin</name>
        <dbReference type="ChEBI" id="CHEBI:18408"/>
    </ligand>
</feature>
<feature type="binding site" evidence="1">
    <location>
        <position position="258"/>
    </location>
    <ligand>
        <name>adenosylcob(III)alamin</name>
        <dbReference type="ChEBI" id="CHEBI:18408"/>
    </ligand>
</feature>
<protein>
    <recommendedName>
        <fullName evidence="1">Ethanolamine ammonia-lyase small subunit</fullName>
        <shortName evidence="1">EAL small subunit</shortName>
        <ecNumber evidence="1">4.3.1.7</ecNumber>
    </recommendedName>
</protein>
<reference key="1">
    <citation type="journal article" date="2011" name="Proc. Natl. Acad. Sci. U.S.A.">
        <title>Genomic anatomy of Escherichia coli O157:H7 outbreaks.</title>
        <authorList>
            <person name="Eppinger M."/>
            <person name="Mammel M.K."/>
            <person name="Leclerc J.E."/>
            <person name="Ravel J."/>
            <person name="Cebula T.A."/>
        </authorList>
    </citation>
    <scope>NUCLEOTIDE SEQUENCE [LARGE SCALE GENOMIC DNA]</scope>
    <source>
        <strain>EC4115 / EHEC</strain>
    </source>
</reference>
<name>EUTC_ECO5E</name>
<dbReference type="EC" id="4.3.1.7" evidence="1"/>
<dbReference type="EMBL" id="CP001164">
    <property type="protein sequence ID" value="ACI39383.1"/>
    <property type="molecule type" value="Genomic_DNA"/>
</dbReference>
<dbReference type="RefSeq" id="WP_000372370.1">
    <property type="nucleotide sequence ID" value="NC_011353.1"/>
</dbReference>
<dbReference type="SMR" id="B5YZY5"/>
<dbReference type="KEGG" id="ecf:ECH74115_3670"/>
<dbReference type="HOGENOM" id="CLU_068224_0_0_6"/>
<dbReference type="UniPathway" id="UPA00560"/>
<dbReference type="GO" id="GO:0009350">
    <property type="term" value="C:ethanolamine ammonia-lyase complex"/>
    <property type="evidence" value="ECO:0007669"/>
    <property type="project" value="UniProtKB-UniRule"/>
</dbReference>
<dbReference type="GO" id="GO:0031471">
    <property type="term" value="C:ethanolamine degradation polyhedral organelle"/>
    <property type="evidence" value="ECO:0007669"/>
    <property type="project" value="UniProtKB-UniRule"/>
</dbReference>
<dbReference type="GO" id="GO:0031419">
    <property type="term" value="F:cobalamin binding"/>
    <property type="evidence" value="ECO:0007669"/>
    <property type="project" value="UniProtKB-UniRule"/>
</dbReference>
<dbReference type="GO" id="GO:0008851">
    <property type="term" value="F:ethanolamine ammonia-lyase activity"/>
    <property type="evidence" value="ECO:0007669"/>
    <property type="project" value="UniProtKB-UniRule"/>
</dbReference>
<dbReference type="GO" id="GO:0006520">
    <property type="term" value="P:amino acid metabolic process"/>
    <property type="evidence" value="ECO:0007669"/>
    <property type="project" value="InterPro"/>
</dbReference>
<dbReference type="GO" id="GO:0046336">
    <property type="term" value="P:ethanolamine catabolic process"/>
    <property type="evidence" value="ECO:0007669"/>
    <property type="project" value="UniProtKB-UniRule"/>
</dbReference>
<dbReference type="FunFam" id="3.40.50.11240:FF:000001">
    <property type="entry name" value="Ethanolamine ammonia-lyase light chain"/>
    <property type="match status" value="1"/>
</dbReference>
<dbReference type="Gene3D" id="6.10.140.690">
    <property type="match status" value="1"/>
</dbReference>
<dbReference type="Gene3D" id="6.10.250.2060">
    <property type="match status" value="1"/>
</dbReference>
<dbReference type="Gene3D" id="3.40.50.11240">
    <property type="entry name" value="Ethanolamine ammonia-lyase light chain (EutC)"/>
    <property type="match status" value="1"/>
</dbReference>
<dbReference type="HAMAP" id="MF_00601">
    <property type="entry name" value="EutC"/>
    <property type="match status" value="1"/>
</dbReference>
<dbReference type="InterPro" id="IPR009246">
    <property type="entry name" value="EutC"/>
</dbReference>
<dbReference type="InterPro" id="IPR042251">
    <property type="entry name" value="EutC_C"/>
</dbReference>
<dbReference type="NCBIfam" id="NF003971">
    <property type="entry name" value="PRK05465.1"/>
    <property type="match status" value="1"/>
</dbReference>
<dbReference type="PANTHER" id="PTHR39330">
    <property type="entry name" value="ETHANOLAMINE AMMONIA-LYASE LIGHT CHAIN"/>
    <property type="match status" value="1"/>
</dbReference>
<dbReference type="PANTHER" id="PTHR39330:SF1">
    <property type="entry name" value="ETHANOLAMINE AMMONIA-LYASE SMALL SUBUNIT"/>
    <property type="match status" value="1"/>
</dbReference>
<dbReference type="Pfam" id="PF05985">
    <property type="entry name" value="EutC"/>
    <property type="match status" value="1"/>
</dbReference>
<dbReference type="PIRSF" id="PIRSF018982">
    <property type="entry name" value="EutC"/>
    <property type="match status" value="1"/>
</dbReference>
<evidence type="ECO:0000255" key="1">
    <source>
        <dbReference type="HAMAP-Rule" id="MF_00601"/>
    </source>
</evidence>
<sequence length="295" mass="31812">MDQKQIEEIVRSVMASMGQTAPAPSEAKCATTTCAAPVTSESCALDLGSAEAKVWIGVENPHRADVLTELRRSTVARVCTGRAGPRPRTLALLRFLADHSRSKDTVLKEVPEEWVKAQGLLEVRSEISDKNLYLTRPDMGRRLCAEAVEALKAQCVANPDVQVVISDGLSTDAITVNYEEILPPLMAGLKQAGLKVGTPFFVRYGRVKIEDQIGEILGAKVVILLVGERPGLGQSESLSCYAVYSPRMATTVEADRTCISNIHQGGTPPVEAAAVIVDLAKRMLEQKASGINMTR</sequence>
<comment type="function">
    <text evidence="1">Catalyzes the deamination of various vicinal amino-alcohols to oxo compounds. Allows this organism to utilize ethanolamine as the sole source of nitrogen and carbon in the presence of external vitamin B12.</text>
</comment>
<comment type="catalytic activity">
    <reaction evidence="1">
        <text>ethanolamine = acetaldehyde + NH4(+)</text>
        <dbReference type="Rhea" id="RHEA:15313"/>
        <dbReference type="ChEBI" id="CHEBI:15343"/>
        <dbReference type="ChEBI" id="CHEBI:28938"/>
        <dbReference type="ChEBI" id="CHEBI:57603"/>
        <dbReference type="EC" id="4.3.1.7"/>
    </reaction>
</comment>
<comment type="cofactor">
    <cofactor evidence="1">
        <name>adenosylcob(III)alamin</name>
        <dbReference type="ChEBI" id="CHEBI:18408"/>
    </cofactor>
    <text evidence="1">Binds between the large and small subunits.</text>
</comment>
<comment type="pathway">
    <text evidence="1">Amine and polyamine degradation; ethanolamine degradation.</text>
</comment>
<comment type="subunit">
    <text evidence="1">The basic unit is a heterodimer which dimerizes to form tetramers. The heterotetramers trimerize; 6 large subunits form a core ring with 6 small subunits projecting outwards.</text>
</comment>
<comment type="subcellular location">
    <subcellularLocation>
        <location evidence="1">Bacterial microcompartment</location>
    </subcellularLocation>
</comment>
<comment type="similarity">
    <text evidence="1">Belongs to the EutC family.</text>
</comment>
<accession>B5YZY5</accession>